<reference key="1">
    <citation type="submission" date="2009-01" db="EMBL/GenBank/DDBJ databases">
        <title>Complete sequence of chromosome of Arthrobacter chlorophenolicus A6.</title>
        <authorList>
            <consortium name="US DOE Joint Genome Institute"/>
            <person name="Lucas S."/>
            <person name="Copeland A."/>
            <person name="Lapidus A."/>
            <person name="Glavina del Rio T."/>
            <person name="Tice H."/>
            <person name="Bruce D."/>
            <person name="Goodwin L."/>
            <person name="Pitluck S."/>
            <person name="Goltsman E."/>
            <person name="Clum A."/>
            <person name="Larimer F."/>
            <person name="Land M."/>
            <person name="Hauser L."/>
            <person name="Kyrpides N."/>
            <person name="Mikhailova N."/>
            <person name="Jansson J."/>
            <person name="Richardson P."/>
        </authorList>
    </citation>
    <scope>NUCLEOTIDE SEQUENCE [LARGE SCALE GENOMIC DNA]</scope>
    <source>
        <strain>ATCC 700700 / DSM 12829 / CIP 107037 / JCM 12360 / KCTC 9906 / NCIMB 13794 / A6</strain>
    </source>
</reference>
<sequence length="102" mass="10974">MVYAIVRAGGRQEKVSVGDFVTLNRVAGGAGSTIELPALLLVDGDKITTAAADLAKVTVTAEILQDLRGPKIVIQKFKNKTGYKKRQGHRQELTKVKITGIK</sequence>
<protein>
    <recommendedName>
        <fullName evidence="1">Large ribosomal subunit protein bL21</fullName>
    </recommendedName>
    <alternativeName>
        <fullName evidence="2">50S ribosomal protein L21</fullName>
    </alternativeName>
</protein>
<accession>B8HA21</accession>
<gene>
    <name evidence="1" type="primary">rplU</name>
    <name type="ordered locus">Achl_2145</name>
</gene>
<feature type="chain" id="PRO_1000166698" description="Large ribosomal subunit protein bL21">
    <location>
        <begin position="1"/>
        <end position="102"/>
    </location>
</feature>
<dbReference type="EMBL" id="CP001341">
    <property type="protein sequence ID" value="ACL40113.1"/>
    <property type="molecule type" value="Genomic_DNA"/>
</dbReference>
<dbReference type="RefSeq" id="WP_015937330.1">
    <property type="nucleotide sequence ID" value="NC_011886.1"/>
</dbReference>
<dbReference type="SMR" id="B8HA21"/>
<dbReference type="STRING" id="452863.Achl_2145"/>
<dbReference type="KEGG" id="ach:Achl_2145"/>
<dbReference type="eggNOG" id="COG0261">
    <property type="taxonomic scope" value="Bacteria"/>
</dbReference>
<dbReference type="HOGENOM" id="CLU_061463_3_0_11"/>
<dbReference type="OrthoDB" id="9813334at2"/>
<dbReference type="Proteomes" id="UP000002505">
    <property type="component" value="Chromosome"/>
</dbReference>
<dbReference type="GO" id="GO:0005737">
    <property type="term" value="C:cytoplasm"/>
    <property type="evidence" value="ECO:0007669"/>
    <property type="project" value="UniProtKB-ARBA"/>
</dbReference>
<dbReference type="GO" id="GO:1990904">
    <property type="term" value="C:ribonucleoprotein complex"/>
    <property type="evidence" value="ECO:0007669"/>
    <property type="project" value="UniProtKB-KW"/>
</dbReference>
<dbReference type="GO" id="GO:0005840">
    <property type="term" value="C:ribosome"/>
    <property type="evidence" value="ECO:0007669"/>
    <property type="project" value="UniProtKB-KW"/>
</dbReference>
<dbReference type="GO" id="GO:0019843">
    <property type="term" value="F:rRNA binding"/>
    <property type="evidence" value="ECO:0007669"/>
    <property type="project" value="UniProtKB-UniRule"/>
</dbReference>
<dbReference type="GO" id="GO:0003735">
    <property type="term" value="F:structural constituent of ribosome"/>
    <property type="evidence" value="ECO:0007669"/>
    <property type="project" value="InterPro"/>
</dbReference>
<dbReference type="GO" id="GO:0006412">
    <property type="term" value="P:translation"/>
    <property type="evidence" value="ECO:0007669"/>
    <property type="project" value="UniProtKB-UniRule"/>
</dbReference>
<dbReference type="HAMAP" id="MF_01363">
    <property type="entry name" value="Ribosomal_bL21"/>
    <property type="match status" value="1"/>
</dbReference>
<dbReference type="InterPro" id="IPR028909">
    <property type="entry name" value="bL21-like"/>
</dbReference>
<dbReference type="InterPro" id="IPR036164">
    <property type="entry name" value="bL21-like_sf"/>
</dbReference>
<dbReference type="InterPro" id="IPR001787">
    <property type="entry name" value="Ribosomal_bL21"/>
</dbReference>
<dbReference type="InterPro" id="IPR018258">
    <property type="entry name" value="Ribosomal_bL21_CS"/>
</dbReference>
<dbReference type="NCBIfam" id="TIGR00061">
    <property type="entry name" value="L21"/>
    <property type="match status" value="1"/>
</dbReference>
<dbReference type="PANTHER" id="PTHR21349">
    <property type="entry name" value="50S RIBOSOMAL PROTEIN L21"/>
    <property type="match status" value="1"/>
</dbReference>
<dbReference type="PANTHER" id="PTHR21349:SF0">
    <property type="entry name" value="LARGE RIBOSOMAL SUBUNIT PROTEIN BL21M"/>
    <property type="match status" value="1"/>
</dbReference>
<dbReference type="Pfam" id="PF00829">
    <property type="entry name" value="Ribosomal_L21p"/>
    <property type="match status" value="1"/>
</dbReference>
<dbReference type="SUPFAM" id="SSF141091">
    <property type="entry name" value="L21p-like"/>
    <property type="match status" value="1"/>
</dbReference>
<dbReference type="PROSITE" id="PS01169">
    <property type="entry name" value="RIBOSOMAL_L21"/>
    <property type="match status" value="1"/>
</dbReference>
<evidence type="ECO:0000255" key="1">
    <source>
        <dbReference type="HAMAP-Rule" id="MF_01363"/>
    </source>
</evidence>
<evidence type="ECO:0000305" key="2"/>
<name>RL21_PSECP</name>
<comment type="function">
    <text evidence="1">This protein binds to 23S rRNA in the presence of protein L20.</text>
</comment>
<comment type="subunit">
    <text evidence="1">Part of the 50S ribosomal subunit. Contacts protein L20.</text>
</comment>
<comment type="similarity">
    <text evidence="1">Belongs to the bacterial ribosomal protein bL21 family.</text>
</comment>
<organism>
    <name type="scientific">Pseudarthrobacter chlorophenolicus (strain ATCC 700700 / DSM 12829 / CIP 107037 / JCM 12360 / KCTC 9906 / NCIMB 13794 / A6)</name>
    <name type="common">Arthrobacter chlorophenolicus</name>
    <dbReference type="NCBI Taxonomy" id="452863"/>
    <lineage>
        <taxon>Bacteria</taxon>
        <taxon>Bacillati</taxon>
        <taxon>Actinomycetota</taxon>
        <taxon>Actinomycetes</taxon>
        <taxon>Micrococcales</taxon>
        <taxon>Micrococcaceae</taxon>
        <taxon>Pseudarthrobacter</taxon>
    </lineage>
</organism>
<keyword id="KW-0687">Ribonucleoprotein</keyword>
<keyword id="KW-0689">Ribosomal protein</keyword>
<keyword id="KW-0694">RNA-binding</keyword>
<keyword id="KW-0699">rRNA-binding</keyword>
<proteinExistence type="inferred from homology"/>